<feature type="chain" id="PRO_1000213874" description="Carbamoyl phosphate synthase large chain">
    <location>
        <begin position="1"/>
        <end position="1068"/>
    </location>
</feature>
<feature type="domain" description="ATP-grasp 1" evidence="1">
    <location>
        <begin position="133"/>
        <end position="327"/>
    </location>
</feature>
<feature type="domain" description="ATP-grasp 2" evidence="1">
    <location>
        <begin position="672"/>
        <end position="862"/>
    </location>
</feature>
<feature type="domain" description="MGS-like" evidence="1">
    <location>
        <begin position="931"/>
        <end position="1068"/>
    </location>
</feature>
<feature type="region of interest" description="Carboxyphosphate synthetic domain" evidence="1">
    <location>
        <begin position="1"/>
        <end position="401"/>
    </location>
</feature>
<feature type="region of interest" description="Oligomerization domain" evidence="1">
    <location>
        <begin position="402"/>
        <end position="546"/>
    </location>
</feature>
<feature type="region of interest" description="Carbamoyl phosphate synthetic domain" evidence="1">
    <location>
        <begin position="547"/>
        <end position="930"/>
    </location>
</feature>
<feature type="region of interest" description="Allosteric domain" evidence="1">
    <location>
        <begin position="931"/>
        <end position="1068"/>
    </location>
</feature>
<feature type="binding site" evidence="1">
    <location>
        <position position="129"/>
    </location>
    <ligand>
        <name>ATP</name>
        <dbReference type="ChEBI" id="CHEBI:30616"/>
        <label>1</label>
    </ligand>
</feature>
<feature type="binding site" evidence="1">
    <location>
        <position position="169"/>
    </location>
    <ligand>
        <name>ATP</name>
        <dbReference type="ChEBI" id="CHEBI:30616"/>
        <label>1</label>
    </ligand>
</feature>
<feature type="binding site" evidence="1">
    <location>
        <position position="175"/>
    </location>
    <ligand>
        <name>ATP</name>
        <dbReference type="ChEBI" id="CHEBI:30616"/>
        <label>1</label>
    </ligand>
</feature>
<feature type="binding site" evidence="1">
    <location>
        <position position="176"/>
    </location>
    <ligand>
        <name>ATP</name>
        <dbReference type="ChEBI" id="CHEBI:30616"/>
        <label>1</label>
    </ligand>
</feature>
<feature type="binding site" evidence="1">
    <location>
        <position position="208"/>
    </location>
    <ligand>
        <name>ATP</name>
        <dbReference type="ChEBI" id="CHEBI:30616"/>
        <label>1</label>
    </ligand>
</feature>
<feature type="binding site" evidence="1">
    <location>
        <position position="210"/>
    </location>
    <ligand>
        <name>ATP</name>
        <dbReference type="ChEBI" id="CHEBI:30616"/>
        <label>1</label>
    </ligand>
</feature>
<feature type="binding site" evidence="1">
    <location>
        <position position="215"/>
    </location>
    <ligand>
        <name>ATP</name>
        <dbReference type="ChEBI" id="CHEBI:30616"/>
        <label>1</label>
    </ligand>
</feature>
<feature type="binding site" evidence="1">
    <location>
        <position position="241"/>
    </location>
    <ligand>
        <name>ATP</name>
        <dbReference type="ChEBI" id="CHEBI:30616"/>
        <label>1</label>
    </ligand>
</feature>
<feature type="binding site" evidence="1">
    <location>
        <position position="242"/>
    </location>
    <ligand>
        <name>ATP</name>
        <dbReference type="ChEBI" id="CHEBI:30616"/>
        <label>1</label>
    </ligand>
</feature>
<feature type="binding site" evidence="1">
    <location>
        <position position="243"/>
    </location>
    <ligand>
        <name>ATP</name>
        <dbReference type="ChEBI" id="CHEBI:30616"/>
        <label>1</label>
    </ligand>
</feature>
<feature type="binding site" evidence="1">
    <location>
        <position position="284"/>
    </location>
    <ligand>
        <name>ATP</name>
        <dbReference type="ChEBI" id="CHEBI:30616"/>
        <label>1</label>
    </ligand>
</feature>
<feature type="binding site" evidence="1">
    <location>
        <position position="284"/>
    </location>
    <ligand>
        <name>Mg(2+)</name>
        <dbReference type="ChEBI" id="CHEBI:18420"/>
        <label>1</label>
    </ligand>
</feature>
<feature type="binding site" evidence="1">
    <location>
        <position position="284"/>
    </location>
    <ligand>
        <name>Mn(2+)</name>
        <dbReference type="ChEBI" id="CHEBI:29035"/>
        <label>1</label>
    </ligand>
</feature>
<feature type="binding site" evidence="1">
    <location>
        <position position="298"/>
    </location>
    <ligand>
        <name>ATP</name>
        <dbReference type="ChEBI" id="CHEBI:30616"/>
        <label>1</label>
    </ligand>
</feature>
<feature type="binding site" evidence="1">
    <location>
        <position position="298"/>
    </location>
    <ligand>
        <name>Mg(2+)</name>
        <dbReference type="ChEBI" id="CHEBI:18420"/>
        <label>1</label>
    </ligand>
</feature>
<feature type="binding site" evidence="1">
    <location>
        <position position="298"/>
    </location>
    <ligand>
        <name>Mg(2+)</name>
        <dbReference type="ChEBI" id="CHEBI:18420"/>
        <label>2</label>
    </ligand>
</feature>
<feature type="binding site" evidence="1">
    <location>
        <position position="298"/>
    </location>
    <ligand>
        <name>Mn(2+)</name>
        <dbReference type="ChEBI" id="CHEBI:29035"/>
        <label>1</label>
    </ligand>
</feature>
<feature type="binding site" evidence="1">
    <location>
        <position position="298"/>
    </location>
    <ligand>
        <name>Mn(2+)</name>
        <dbReference type="ChEBI" id="CHEBI:29035"/>
        <label>2</label>
    </ligand>
</feature>
<feature type="binding site" evidence="1">
    <location>
        <position position="300"/>
    </location>
    <ligand>
        <name>Mg(2+)</name>
        <dbReference type="ChEBI" id="CHEBI:18420"/>
        <label>2</label>
    </ligand>
</feature>
<feature type="binding site" evidence="1">
    <location>
        <position position="300"/>
    </location>
    <ligand>
        <name>Mn(2+)</name>
        <dbReference type="ChEBI" id="CHEBI:29035"/>
        <label>2</label>
    </ligand>
</feature>
<feature type="binding site" evidence="1">
    <location>
        <position position="708"/>
    </location>
    <ligand>
        <name>ATP</name>
        <dbReference type="ChEBI" id="CHEBI:30616"/>
        <label>2</label>
    </ligand>
</feature>
<feature type="binding site" evidence="1">
    <location>
        <position position="747"/>
    </location>
    <ligand>
        <name>ATP</name>
        <dbReference type="ChEBI" id="CHEBI:30616"/>
        <label>2</label>
    </ligand>
</feature>
<feature type="binding site" evidence="1">
    <location>
        <position position="749"/>
    </location>
    <ligand>
        <name>ATP</name>
        <dbReference type="ChEBI" id="CHEBI:30616"/>
        <label>2</label>
    </ligand>
</feature>
<feature type="binding site" evidence="1">
    <location>
        <position position="753"/>
    </location>
    <ligand>
        <name>ATP</name>
        <dbReference type="ChEBI" id="CHEBI:30616"/>
        <label>2</label>
    </ligand>
</feature>
<feature type="binding site" evidence="1">
    <location>
        <position position="778"/>
    </location>
    <ligand>
        <name>ATP</name>
        <dbReference type="ChEBI" id="CHEBI:30616"/>
        <label>2</label>
    </ligand>
</feature>
<feature type="binding site" evidence="1">
    <location>
        <position position="779"/>
    </location>
    <ligand>
        <name>ATP</name>
        <dbReference type="ChEBI" id="CHEBI:30616"/>
        <label>2</label>
    </ligand>
</feature>
<feature type="binding site" evidence="1">
    <location>
        <position position="780"/>
    </location>
    <ligand>
        <name>ATP</name>
        <dbReference type="ChEBI" id="CHEBI:30616"/>
        <label>2</label>
    </ligand>
</feature>
<feature type="binding site" evidence="1">
    <location>
        <position position="781"/>
    </location>
    <ligand>
        <name>ATP</name>
        <dbReference type="ChEBI" id="CHEBI:30616"/>
        <label>2</label>
    </ligand>
</feature>
<feature type="binding site" evidence="1">
    <location>
        <position position="821"/>
    </location>
    <ligand>
        <name>ATP</name>
        <dbReference type="ChEBI" id="CHEBI:30616"/>
        <label>2</label>
    </ligand>
</feature>
<feature type="binding site" evidence="1">
    <location>
        <position position="821"/>
    </location>
    <ligand>
        <name>Mg(2+)</name>
        <dbReference type="ChEBI" id="CHEBI:18420"/>
        <label>3</label>
    </ligand>
</feature>
<feature type="binding site" evidence="1">
    <location>
        <position position="821"/>
    </location>
    <ligand>
        <name>Mn(2+)</name>
        <dbReference type="ChEBI" id="CHEBI:29035"/>
        <label>3</label>
    </ligand>
</feature>
<feature type="binding site" evidence="1">
    <location>
        <position position="833"/>
    </location>
    <ligand>
        <name>ATP</name>
        <dbReference type="ChEBI" id="CHEBI:30616"/>
        <label>2</label>
    </ligand>
</feature>
<feature type="binding site" evidence="1">
    <location>
        <position position="833"/>
    </location>
    <ligand>
        <name>Mg(2+)</name>
        <dbReference type="ChEBI" id="CHEBI:18420"/>
        <label>3</label>
    </ligand>
</feature>
<feature type="binding site" evidence="1">
    <location>
        <position position="833"/>
    </location>
    <ligand>
        <name>Mg(2+)</name>
        <dbReference type="ChEBI" id="CHEBI:18420"/>
        <label>4</label>
    </ligand>
</feature>
<feature type="binding site" evidence="1">
    <location>
        <position position="833"/>
    </location>
    <ligand>
        <name>Mn(2+)</name>
        <dbReference type="ChEBI" id="CHEBI:29035"/>
        <label>3</label>
    </ligand>
</feature>
<feature type="binding site" evidence="1">
    <location>
        <position position="833"/>
    </location>
    <ligand>
        <name>Mn(2+)</name>
        <dbReference type="ChEBI" id="CHEBI:29035"/>
        <label>4</label>
    </ligand>
</feature>
<feature type="binding site" evidence="1">
    <location>
        <position position="835"/>
    </location>
    <ligand>
        <name>Mg(2+)</name>
        <dbReference type="ChEBI" id="CHEBI:18420"/>
        <label>4</label>
    </ligand>
</feature>
<feature type="binding site" evidence="1">
    <location>
        <position position="835"/>
    </location>
    <ligand>
        <name>Mn(2+)</name>
        <dbReference type="ChEBI" id="CHEBI:29035"/>
        <label>4</label>
    </ligand>
</feature>
<accession>C4ZEK2</accession>
<comment type="function">
    <text evidence="1">Large subunit of the glutamine-dependent carbamoyl phosphate synthetase (CPSase). CPSase catalyzes the formation of carbamoyl phosphate from the ammonia moiety of glutamine, carbonate, and phosphate donated by ATP, constituting the first step of 2 biosynthetic pathways, one leading to arginine and/or urea and the other to pyrimidine nucleotides. The large subunit (synthetase) binds the substrates ammonia (free or transferred from glutamine from the small subunit), hydrogencarbonate and ATP and carries out an ATP-coupled ligase reaction, activating hydrogencarbonate by forming carboxy phosphate which reacts with ammonia to form carbamoyl phosphate.</text>
</comment>
<comment type="catalytic activity">
    <reaction evidence="1">
        <text>hydrogencarbonate + L-glutamine + 2 ATP + H2O = carbamoyl phosphate + L-glutamate + 2 ADP + phosphate + 2 H(+)</text>
        <dbReference type="Rhea" id="RHEA:18633"/>
        <dbReference type="ChEBI" id="CHEBI:15377"/>
        <dbReference type="ChEBI" id="CHEBI:15378"/>
        <dbReference type="ChEBI" id="CHEBI:17544"/>
        <dbReference type="ChEBI" id="CHEBI:29985"/>
        <dbReference type="ChEBI" id="CHEBI:30616"/>
        <dbReference type="ChEBI" id="CHEBI:43474"/>
        <dbReference type="ChEBI" id="CHEBI:58228"/>
        <dbReference type="ChEBI" id="CHEBI:58359"/>
        <dbReference type="ChEBI" id="CHEBI:456216"/>
        <dbReference type="EC" id="6.3.5.5"/>
    </reaction>
</comment>
<comment type="catalytic activity">
    <molecule>Carbamoyl phosphate synthase large chain</molecule>
    <reaction evidence="1">
        <text>hydrogencarbonate + NH4(+) + 2 ATP = carbamoyl phosphate + 2 ADP + phosphate + 2 H(+)</text>
        <dbReference type="Rhea" id="RHEA:18029"/>
        <dbReference type="ChEBI" id="CHEBI:15378"/>
        <dbReference type="ChEBI" id="CHEBI:17544"/>
        <dbReference type="ChEBI" id="CHEBI:28938"/>
        <dbReference type="ChEBI" id="CHEBI:30616"/>
        <dbReference type="ChEBI" id="CHEBI:43474"/>
        <dbReference type="ChEBI" id="CHEBI:58228"/>
        <dbReference type="ChEBI" id="CHEBI:456216"/>
        <dbReference type="EC" id="6.3.4.16"/>
    </reaction>
</comment>
<comment type="cofactor">
    <cofactor evidence="1">
        <name>Mg(2+)</name>
        <dbReference type="ChEBI" id="CHEBI:18420"/>
    </cofactor>
    <cofactor evidence="1">
        <name>Mn(2+)</name>
        <dbReference type="ChEBI" id="CHEBI:29035"/>
    </cofactor>
    <text evidence="1">Binds 4 Mg(2+) or Mn(2+) ions per subunit.</text>
</comment>
<comment type="pathway">
    <text evidence="1">Amino-acid biosynthesis; L-arginine biosynthesis; carbamoyl phosphate from bicarbonate: step 1/1.</text>
</comment>
<comment type="pathway">
    <text evidence="1">Pyrimidine metabolism; UMP biosynthesis via de novo pathway; (S)-dihydroorotate from bicarbonate: step 1/3.</text>
</comment>
<comment type="subunit">
    <text evidence="1">Composed of two chains; the small (or glutamine) chain promotes the hydrolysis of glutamine to ammonia, which is used by the large (or ammonia) chain to synthesize carbamoyl phosphate. Tetramer of heterodimers (alpha,beta)4.</text>
</comment>
<comment type="domain">
    <text evidence="1">The large subunit is composed of 2 ATP-grasp domains that are involved in binding the 2 ATP molecules needed for carbamoyl phosphate synthesis. The N-terminal ATP-grasp domain (referred to as the carboxyphosphate synthetic component) catalyzes the ATP-dependent phosphorylation of hydrogencarbonate to carboxyphosphate and the subsequent nucleophilic attack by ammonia to form a carbamate intermediate. The C-terminal ATP-grasp domain (referred to as the carbamoyl phosphate synthetic component) then catalyzes the phosphorylation of carbamate with the second ATP to form the end product carbamoyl phosphate. The reactive and unstable enzyme intermediates are sequentially channeled from one active site to the next through the interior of the protein over a distance of at least 96 A.</text>
</comment>
<comment type="similarity">
    <text evidence="1">Belongs to the CarB family.</text>
</comment>
<proteinExistence type="inferred from homology"/>
<evidence type="ECO:0000255" key="1">
    <source>
        <dbReference type="HAMAP-Rule" id="MF_01210"/>
    </source>
</evidence>
<keyword id="KW-0028">Amino-acid biosynthesis</keyword>
<keyword id="KW-0055">Arginine biosynthesis</keyword>
<keyword id="KW-0067">ATP-binding</keyword>
<keyword id="KW-0436">Ligase</keyword>
<keyword id="KW-0460">Magnesium</keyword>
<keyword id="KW-0464">Manganese</keyword>
<keyword id="KW-0479">Metal-binding</keyword>
<keyword id="KW-0547">Nucleotide-binding</keyword>
<keyword id="KW-0665">Pyrimidine biosynthesis</keyword>
<keyword id="KW-0677">Repeat</keyword>
<dbReference type="EC" id="6.3.4.16" evidence="1"/>
<dbReference type="EC" id="6.3.5.5" evidence="1"/>
<dbReference type="EMBL" id="CP001107">
    <property type="protein sequence ID" value="ACR74518.1"/>
    <property type="molecule type" value="Genomic_DNA"/>
</dbReference>
<dbReference type="RefSeq" id="WP_012741634.1">
    <property type="nucleotide sequence ID" value="NC_012781.1"/>
</dbReference>
<dbReference type="SMR" id="C4ZEK2"/>
<dbReference type="STRING" id="515619.EUBREC_0732"/>
<dbReference type="PaxDb" id="515619-EUBREC_0732"/>
<dbReference type="GeneID" id="86987611"/>
<dbReference type="KEGG" id="ere:EUBREC_0732"/>
<dbReference type="HOGENOM" id="CLU_000513_1_0_9"/>
<dbReference type="UniPathway" id="UPA00068">
    <property type="reaction ID" value="UER00171"/>
</dbReference>
<dbReference type="UniPathway" id="UPA00070">
    <property type="reaction ID" value="UER00115"/>
</dbReference>
<dbReference type="Proteomes" id="UP000001477">
    <property type="component" value="Chromosome"/>
</dbReference>
<dbReference type="GO" id="GO:0005737">
    <property type="term" value="C:cytoplasm"/>
    <property type="evidence" value="ECO:0007669"/>
    <property type="project" value="TreeGrafter"/>
</dbReference>
<dbReference type="GO" id="GO:0005524">
    <property type="term" value="F:ATP binding"/>
    <property type="evidence" value="ECO:0007669"/>
    <property type="project" value="UniProtKB-UniRule"/>
</dbReference>
<dbReference type="GO" id="GO:0004087">
    <property type="term" value="F:carbamoyl-phosphate synthase (ammonia) activity"/>
    <property type="evidence" value="ECO:0007669"/>
    <property type="project" value="RHEA"/>
</dbReference>
<dbReference type="GO" id="GO:0004088">
    <property type="term" value="F:carbamoyl-phosphate synthase (glutamine-hydrolyzing) activity"/>
    <property type="evidence" value="ECO:0007669"/>
    <property type="project" value="UniProtKB-UniRule"/>
</dbReference>
<dbReference type="GO" id="GO:0046872">
    <property type="term" value="F:metal ion binding"/>
    <property type="evidence" value="ECO:0007669"/>
    <property type="project" value="UniProtKB-KW"/>
</dbReference>
<dbReference type="GO" id="GO:0044205">
    <property type="term" value="P:'de novo' UMP biosynthetic process"/>
    <property type="evidence" value="ECO:0007669"/>
    <property type="project" value="UniProtKB-UniRule"/>
</dbReference>
<dbReference type="GO" id="GO:0006541">
    <property type="term" value="P:glutamine metabolic process"/>
    <property type="evidence" value="ECO:0007669"/>
    <property type="project" value="TreeGrafter"/>
</dbReference>
<dbReference type="GO" id="GO:0006526">
    <property type="term" value="P:L-arginine biosynthetic process"/>
    <property type="evidence" value="ECO:0007669"/>
    <property type="project" value="UniProtKB-UniRule"/>
</dbReference>
<dbReference type="CDD" id="cd01424">
    <property type="entry name" value="MGS_CPS_II"/>
    <property type="match status" value="1"/>
</dbReference>
<dbReference type="FunFam" id="1.10.1030.10:FF:000002">
    <property type="entry name" value="Carbamoyl-phosphate synthase large chain"/>
    <property type="match status" value="1"/>
</dbReference>
<dbReference type="FunFam" id="3.30.470.20:FF:000001">
    <property type="entry name" value="Carbamoyl-phosphate synthase large chain"/>
    <property type="match status" value="1"/>
</dbReference>
<dbReference type="FunFam" id="3.30.470.20:FF:000026">
    <property type="entry name" value="Carbamoyl-phosphate synthase large chain"/>
    <property type="match status" value="1"/>
</dbReference>
<dbReference type="FunFam" id="3.40.50.20:FF:000001">
    <property type="entry name" value="Carbamoyl-phosphate synthase large chain"/>
    <property type="match status" value="2"/>
</dbReference>
<dbReference type="Gene3D" id="3.40.50.20">
    <property type="match status" value="2"/>
</dbReference>
<dbReference type="Gene3D" id="3.30.1490.20">
    <property type="entry name" value="ATP-grasp fold, A domain"/>
    <property type="match status" value="1"/>
</dbReference>
<dbReference type="Gene3D" id="3.30.470.20">
    <property type="entry name" value="ATP-grasp fold, B domain"/>
    <property type="match status" value="2"/>
</dbReference>
<dbReference type="Gene3D" id="1.10.1030.10">
    <property type="entry name" value="Carbamoyl-phosphate synthetase, large subunit oligomerisation domain"/>
    <property type="match status" value="1"/>
</dbReference>
<dbReference type="Gene3D" id="3.40.50.1380">
    <property type="entry name" value="Methylglyoxal synthase-like domain"/>
    <property type="match status" value="1"/>
</dbReference>
<dbReference type="HAMAP" id="MF_01210_B">
    <property type="entry name" value="CPSase_L_chain_B"/>
    <property type="match status" value="1"/>
</dbReference>
<dbReference type="InterPro" id="IPR011761">
    <property type="entry name" value="ATP-grasp"/>
</dbReference>
<dbReference type="InterPro" id="IPR013815">
    <property type="entry name" value="ATP_grasp_subdomain_1"/>
</dbReference>
<dbReference type="InterPro" id="IPR006275">
    <property type="entry name" value="CarbamoylP_synth_lsu"/>
</dbReference>
<dbReference type="InterPro" id="IPR005480">
    <property type="entry name" value="CarbamoylP_synth_lsu_oligo"/>
</dbReference>
<dbReference type="InterPro" id="IPR036897">
    <property type="entry name" value="CarbamoylP_synth_lsu_oligo_sf"/>
</dbReference>
<dbReference type="InterPro" id="IPR005479">
    <property type="entry name" value="CbamoylP_synth_lsu-like_ATP-bd"/>
</dbReference>
<dbReference type="InterPro" id="IPR005483">
    <property type="entry name" value="CbamoylP_synth_lsu_CPSase_dom"/>
</dbReference>
<dbReference type="InterPro" id="IPR011607">
    <property type="entry name" value="MGS-like_dom"/>
</dbReference>
<dbReference type="InterPro" id="IPR036914">
    <property type="entry name" value="MGS-like_dom_sf"/>
</dbReference>
<dbReference type="InterPro" id="IPR033937">
    <property type="entry name" value="MGS_CPS_CarB"/>
</dbReference>
<dbReference type="InterPro" id="IPR016185">
    <property type="entry name" value="PreATP-grasp_dom_sf"/>
</dbReference>
<dbReference type="NCBIfam" id="TIGR01369">
    <property type="entry name" value="CPSaseII_lrg"/>
    <property type="match status" value="1"/>
</dbReference>
<dbReference type="NCBIfam" id="NF003671">
    <property type="entry name" value="PRK05294.1"/>
    <property type="match status" value="1"/>
</dbReference>
<dbReference type="NCBIfam" id="NF009455">
    <property type="entry name" value="PRK12815.1"/>
    <property type="match status" value="1"/>
</dbReference>
<dbReference type="PANTHER" id="PTHR11405:SF53">
    <property type="entry name" value="CARBAMOYL-PHOSPHATE SYNTHASE [AMMONIA], MITOCHONDRIAL"/>
    <property type="match status" value="1"/>
</dbReference>
<dbReference type="PANTHER" id="PTHR11405">
    <property type="entry name" value="CARBAMOYLTRANSFERASE FAMILY MEMBER"/>
    <property type="match status" value="1"/>
</dbReference>
<dbReference type="Pfam" id="PF02786">
    <property type="entry name" value="CPSase_L_D2"/>
    <property type="match status" value="2"/>
</dbReference>
<dbReference type="Pfam" id="PF02787">
    <property type="entry name" value="CPSase_L_D3"/>
    <property type="match status" value="1"/>
</dbReference>
<dbReference type="Pfam" id="PF02142">
    <property type="entry name" value="MGS"/>
    <property type="match status" value="1"/>
</dbReference>
<dbReference type="PRINTS" id="PR00098">
    <property type="entry name" value="CPSASE"/>
</dbReference>
<dbReference type="SMART" id="SM01096">
    <property type="entry name" value="CPSase_L_D3"/>
    <property type="match status" value="1"/>
</dbReference>
<dbReference type="SMART" id="SM01209">
    <property type="entry name" value="GARS_A"/>
    <property type="match status" value="1"/>
</dbReference>
<dbReference type="SMART" id="SM00851">
    <property type="entry name" value="MGS"/>
    <property type="match status" value="1"/>
</dbReference>
<dbReference type="SUPFAM" id="SSF48108">
    <property type="entry name" value="Carbamoyl phosphate synthetase, large subunit connection domain"/>
    <property type="match status" value="1"/>
</dbReference>
<dbReference type="SUPFAM" id="SSF56059">
    <property type="entry name" value="Glutathione synthetase ATP-binding domain-like"/>
    <property type="match status" value="2"/>
</dbReference>
<dbReference type="SUPFAM" id="SSF52335">
    <property type="entry name" value="Methylglyoxal synthase-like"/>
    <property type="match status" value="1"/>
</dbReference>
<dbReference type="SUPFAM" id="SSF52440">
    <property type="entry name" value="PreATP-grasp domain"/>
    <property type="match status" value="2"/>
</dbReference>
<dbReference type="PROSITE" id="PS50975">
    <property type="entry name" value="ATP_GRASP"/>
    <property type="match status" value="2"/>
</dbReference>
<dbReference type="PROSITE" id="PS00866">
    <property type="entry name" value="CPSASE_1"/>
    <property type="match status" value="2"/>
</dbReference>
<dbReference type="PROSITE" id="PS00867">
    <property type="entry name" value="CPSASE_2"/>
    <property type="match status" value="2"/>
</dbReference>
<dbReference type="PROSITE" id="PS51855">
    <property type="entry name" value="MGS"/>
    <property type="match status" value="1"/>
</dbReference>
<protein>
    <recommendedName>
        <fullName evidence="1">Carbamoyl phosphate synthase large chain</fullName>
        <ecNumber evidence="1">6.3.4.16</ecNumber>
        <ecNumber evidence="1">6.3.5.5</ecNumber>
    </recommendedName>
    <alternativeName>
        <fullName evidence="1">Carbamoyl phosphate synthetase ammonia chain</fullName>
    </alternativeName>
</protein>
<organism>
    <name type="scientific">Agathobacter rectalis (strain ATCC 33656 / DSM 3377 / JCM 17463 / KCTC 5835 / VPI 0990)</name>
    <name type="common">Eubacterium rectale</name>
    <dbReference type="NCBI Taxonomy" id="515619"/>
    <lineage>
        <taxon>Bacteria</taxon>
        <taxon>Bacillati</taxon>
        <taxon>Bacillota</taxon>
        <taxon>Clostridia</taxon>
        <taxon>Lachnospirales</taxon>
        <taxon>Lachnospiraceae</taxon>
        <taxon>Agathobacter</taxon>
    </lineage>
</organism>
<sequence>MPRNNDIKKVLVIGSGPIVIGQAAEFDYAGTQACRSLKEEGIEVCLVNSNPATIMTDKQIADQVYIEPLTLESLKEIIIKEKPDSILPTLGGQAGLNLGMELAECGFLDEQGVKLIGTTAETIFKAEDRQAFKDTMEKIGEPIAASQVVKNIEDGIAFTNKIGYPVVLRPAFTLGGSGGGIAHDEQELIDILSNGLRLSRVGEVLVERCIAGWKEIEYEVMRDANGNCITVCNMENIDPVGVHTGDSIVVAPSQTLGDKEYQMLRTSALNIINELQITGGCNVQYALNPDSFEYCVIEVNPRVSRSSALASKATGYPIAKVTAKIALGYHLDEIKNAITQKTYASFEPMLDYCVVKIPRLPFDKFLTAKRTLTTQMKATGEVMSICNNFEGALMKAIRSLEQHVDSLMSYDFTGLTDDELEKQLAVVDDRRIWVIAEALRRGVKYEHIHEITKIDLWFIDKIAILVEMENRLKTEELTVDLLKEAKRIEFPDNVISQLTDIDEADIKKMRYDNGIVAAYKMVDTCAAEFEAETPYYYSVFGSENEAAETNPQKKVLVLGSGPIRIGQGVEFDYCSVHCTWSFAKEGWETIIVNNNPETVSTDFDIADKLYFEPLTAEDVESIVNIEKPDGAVVQFGGQTAIKLTEALMKMGVKILGTKAEDVDAAEDRELFDEILQKTGIPRAAGGTVFTAEEAKKVANEIGYPVLVRPSYVLGGQGMKIAWNDDEIEEFIGIINTITQDHPILVDKYLMGKEIEVDAICDGTDILIPGIMEHIERTGVHSGDSISVYPAHTISEKAKETLVEYTKRLAQALHVVGMINIQFIDMDDNIYVIEVNPRSSRTVPYISKVTGIPIVDLAARIIMGETIKGMGYTPGLAPTADYIAIKMPVFSFEKLRGAEISLGPEMKSTGECLGIDKTFNGALYKAFEGAGVELPKYKQMIMTVKDADKPEAVGVAKRFEKLGYKIYATRSTAKYLQEHGVNALRVNKISQESPNVMDLILGHKIDLVIDTPTQGNGDKTRDGFLIRRNAIETGVYCITAMDTANALAHALETASDKKTPVDIATVKNL</sequence>
<reference key="1">
    <citation type="journal article" date="2009" name="Proc. Natl. Acad. Sci. U.S.A.">
        <title>Characterizing a model human gut microbiota composed of members of its two dominant bacterial phyla.</title>
        <authorList>
            <person name="Mahowald M.A."/>
            <person name="Rey F.E."/>
            <person name="Seedorf H."/>
            <person name="Turnbaugh P.J."/>
            <person name="Fulton R.S."/>
            <person name="Wollam A."/>
            <person name="Shah N."/>
            <person name="Wang C."/>
            <person name="Magrini V."/>
            <person name="Wilson R.K."/>
            <person name="Cantarel B.L."/>
            <person name="Coutinho P.M."/>
            <person name="Henrissat B."/>
            <person name="Crock L.W."/>
            <person name="Russell A."/>
            <person name="Verberkmoes N.C."/>
            <person name="Hettich R.L."/>
            <person name="Gordon J.I."/>
        </authorList>
    </citation>
    <scope>NUCLEOTIDE SEQUENCE [LARGE SCALE GENOMIC DNA]</scope>
    <source>
        <strain>ATCC 33656 / DSM 3377 / JCM 17463 / KCTC 5835 / LMG 30912 / VPI 0990</strain>
    </source>
</reference>
<gene>
    <name evidence="1" type="primary">carB</name>
    <name type="ordered locus">EUBREC_0732</name>
</gene>
<name>CARB_AGARV</name>